<evidence type="ECO:0000255" key="1">
    <source>
        <dbReference type="HAMAP-Rule" id="MF_01398"/>
    </source>
</evidence>
<reference key="1">
    <citation type="submission" date="2005-09" db="EMBL/GenBank/DDBJ databases">
        <title>Complete sequence of chromosome 1 of Rhodobacter sphaeroides 2.4.1.</title>
        <authorList>
            <person name="Copeland A."/>
            <person name="Lucas S."/>
            <person name="Lapidus A."/>
            <person name="Barry K."/>
            <person name="Detter J.C."/>
            <person name="Glavina T."/>
            <person name="Hammon N."/>
            <person name="Israni S."/>
            <person name="Pitluck S."/>
            <person name="Richardson P."/>
            <person name="Mackenzie C."/>
            <person name="Choudhary M."/>
            <person name="Larimer F."/>
            <person name="Hauser L.J."/>
            <person name="Land M."/>
            <person name="Donohue T.J."/>
            <person name="Kaplan S."/>
        </authorList>
    </citation>
    <scope>NUCLEOTIDE SEQUENCE [LARGE SCALE GENOMIC DNA]</scope>
    <source>
        <strain>ATCC 17023 / DSM 158 / JCM 6121 / CCUG 31486 / LMG 2827 / NBRC 12203 / NCIMB 8253 / ATH 2.4.1.</strain>
    </source>
</reference>
<protein>
    <recommendedName>
        <fullName evidence="1">ATP synthase subunit b 1</fullName>
    </recommendedName>
    <alternativeName>
        <fullName evidence="1">ATP synthase F(0) sector subunit b 1</fullName>
    </alternativeName>
    <alternativeName>
        <fullName evidence="1">ATPase subunit I 1</fullName>
    </alternativeName>
    <alternativeName>
        <fullName evidence="1">F-type ATPase subunit b 1</fullName>
        <shortName evidence="1">F-ATPase subunit b 1</shortName>
    </alternativeName>
</protein>
<dbReference type="EMBL" id="CP000143">
    <property type="protein sequence ID" value="ABA80219.2"/>
    <property type="molecule type" value="Genomic_DNA"/>
</dbReference>
<dbReference type="RefSeq" id="WP_017139978.1">
    <property type="nucleotide sequence ID" value="NC_007493.2"/>
</dbReference>
<dbReference type="RefSeq" id="YP_354120.2">
    <property type="nucleotide sequence ID" value="NC_007493.2"/>
</dbReference>
<dbReference type="SMR" id="Q3IZ15"/>
<dbReference type="STRING" id="272943.RSP_1035"/>
<dbReference type="EnsemblBacteria" id="ABA80219">
    <property type="protein sequence ID" value="ABA80219"/>
    <property type="gene ID" value="RSP_1035"/>
</dbReference>
<dbReference type="GeneID" id="3720945"/>
<dbReference type="KEGG" id="rsp:RSP_1035"/>
<dbReference type="PATRIC" id="fig|272943.9.peg.3009"/>
<dbReference type="eggNOG" id="COG0711">
    <property type="taxonomic scope" value="Bacteria"/>
</dbReference>
<dbReference type="OrthoDB" id="8479836at2"/>
<dbReference type="Proteomes" id="UP000002703">
    <property type="component" value="Chromosome 1"/>
</dbReference>
<dbReference type="GO" id="GO:0005886">
    <property type="term" value="C:plasma membrane"/>
    <property type="evidence" value="ECO:0007669"/>
    <property type="project" value="UniProtKB-SubCell"/>
</dbReference>
<dbReference type="GO" id="GO:0045259">
    <property type="term" value="C:proton-transporting ATP synthase complex"/>
    <property type="evidence" value="ECO:0007669"/>
    <property type="project" value="UniProtKB-KW"/>
</dbReference>
<dbReference type="GO" id="GO:0046933">
    <property type="term" value="F:proton-transporting ATP synthase activity, rotational mechanism"/>
    <property type="evidence" value="ECO:0007669"/>
    <property type="project" value="UniProtKB-UniRule"/>
</dbReference>
<dbReference type="GO" id="GO:0046961">
    <property type="term" value="F:proton-transporting ATPase activity, rotational mechanism"/>
    <property type="evidence" value="ECO:0007669"/>
    <property type="project" value="TreeGrafter"/>
</dbReference>
<dbReference type="CDD" id="cd06503">
    <property type="entry name" value="ATP-synt_Fo_b"/>
    <property type="match status" value="1"/>
</dbReference>
<dbReference type="HAMAP" id="MF_01398">
    <property type="entry name" value="ATP_synth_b_bprime"/>
    <property type="match status" value="1"/>
</dbReference>
<dbReference type="InterPro" id="IPR002146">
    <property type="entry name" value="ATP_synth_b/b'su_bac/chlpt"/>
</dbReference>
<dbReference type="InterPro" id="IPR050059">
    <property type="entry name" value="ATP_synthase_B_chain"/>
</dbReference>
<dbReference type="NCBIfam" id="NF009989">
    <property type="entry name" value="PRK13455.1"/>
    <property type="match status" value="1"/>
</dbReference>
<dbReference type="PANTHER" id="PTHR33445:SF1">
    <property type="entry name" value="ATP SYNTHASE SUBUNIT B"/>
    <property type="match status" value="1"/>
</dbReference>
<dbReference type="PANTHER" id="PTHR33445">
    <property type="entry name" value="ATP SYNTHASE SUBUNIT B', CHLOROPLASTIC"/>
    <property type="match status" value="1"/>
</dbReference>
<dbReference type="Pfam" id="PF00430">
    <property type="entry name" value="ATP-synt_B"/>
    <property type="match status" value="1"/>
</dbReference>
<sequence length="184" mass="19676">MKKLSILAVLAASPAMAATGPFLSLSNTNFIVTLAFLLFMGILLYAKVPGRILGMLDKRSVQIRTELEEARALREEARTILASYDRKQKEVQEQAARIVASARDEAQAAAEQAKADLRASIARRLAAAEDQIASAEAGAVRAIREQAVSVAVAAAADLLSRQMTPAAASASIDESIKEVEARFH</sequence>
<gene>
    <name evidence="1" type="primary">atpF1</name>
    <name type="ordered locus">RHOS4_26510</name>
    <name type="ORF">RSP_1035</name>
</gene>
<name>ATPF1_CERS4</name>
<comment type="function">
    <text evidence="1">F(1)F(0) ATP synthase produces ATP from ADP in the presence of a proton or sodium gradient. F-type ATPases consist of two structural domains, F(1) containing the extramembraneous catalytic core and F(0) containing the membrane proton channel, linked together by a central stalk and a peripheral stalk. During catalysis, ATP synthesis in the catalytic domain of F(1) is coupled via a rotary mechanism of the central stalk subunits to proton translocation.</text>
</comment>
<comment type="function">
    <text evidence="1">Component of the F(0) channel, it forms part of the peripheral stalk, linking F(1) to F(0).</text>
</comment>
<comment type="subunit">
    <text evidence="1">F-type ATPases have 2 components, F(1) - the catalytic core - and F(0) - the membrane proton channel. F(1) has five subunits: alpha(3), beta(3), gamma(1), delta(1), epsilon(1). F(0) has three main subunits: a(1), b(2) and c(10-14). The alpha and beta chains form an alternating ring which encloses part of the gamma chain. F(1) is attached to F(0) by a central stalk formed by the gamma and epsilon chains, while a peripheral stalk is formed by the delta and b chains.</text>
</comment>
<comment type="subcellular location">
    <subcellularLocation>
        <location evidence="1">Cell inner membrane</location>
        <topology evidence="1">Single-pass membrane protein</topology>
    </subcellularLocation>
</comment>
<comment type="similarity">
    <text evidence="1">Belongs to the ATPase B chain family.</text>
</comment>
<accession>Q3IZ15</accession>
<organism>
    <name type="scientific">Cereibacter sphaeroides (strain ATCC 17023 / DSM 158 / JCM 6121 / CCUG 31486 / LMG 2827 / NBRC 12203 / NCIMB 8253 / ATH 2.4.1.)</name>
    <name type="common">Rhodobacter sphaeroides</name>
    <dbReference type="NCBI Taxonomy" id="272943"/>
    <lineage>
        <taxon>Bacteria</taxon>
        <taxon>Pseudomonadati</taxon>
        <taxon>Pseudomonadota</taxon>
        <taxon>Alphaproteobacteria</taxon>
        <taxon>Rhodobacterales</taxon>
        <taxon>Paracoccaceae</taxon>
        <taxon>Cereibacter</taxon>
    </lineage>
</organism>
<keyword id="KW-0066">ATP synthesis</keyword>
<keyword id="KW-0997">Cell inner membrane</keyword>
<keyword id="KW-1003">Cell membrane</keyword>
<keyword id="KW-0138">CF(0)</keyword>
<keyword id="KW-0375">Hydrogen ion transport</keyword>
<keyword id="KW-0406">Ion transport</keyword>
<keyword id="KW-0472">Membrane</keyword>
<keyword id="KW-1185">Reference proteome</keyword>
<keyword id="KW-0812">Transmembrane</keyword>
<keyword id="KW-1133">Transmembrane helix</keyword>
<keyword id="KW-0813">Transport</keyword>
<proteinExistence type="inferred from homology"/>
<feature type="chain" id="PRO_0000368714" description="ATP synthase subunit b 1">
    <location>
        <begin position="1"/>
        <end position="184"/>
    </location>
</feature>
<feature type="transmembrane region" description="Helical" evidence="1">
    <location>
        <begin position="4"/>
        <end position="24"/>
    </location>
</feature>